<gene>
    <name evidence="3" type="primary">waaF</name>
    <name evidence="6" type="ordered locus">Cj1148</name>
</gene>
<evidence type="ECO:0000250" key="1">
    <source>
        <dbReference type="UniProtKB" id="P37692"/>
    </source>
</evidence>
<evidence type="ECO:0000269" key="2">
    <source>
    </source>
</evidence>
<evidence type="ECO:0000303" key="3">
    <source>
    </source>
</evidence>
<evidence type="ECO:0000305" key="4"/>
<evidence type="ECO:0000305" key="5">
    <source>
    </source>
</evidence>
<evidence type="ECO:0000312" key="6">
    <source>
        <dbReference type="EMBL" id="CAL35263.1"/>
    </source>
</evidence>
<sequence>MKIFIHLPTWLGDTVMASPALYTIKEHFKDAQFILYGSFVSTALFKEFPNSKIIIENKLSRYKQALSLRKELGKIDLSFAFRSAFSSKIILHILKTKQRYFFDKNKYKEEHQVLKYLYFIENSLSIKAHFKDLKLPFKLKFQNPLILRNGKKILGLNPGASFGSAKRWDASYFAKVALNFSQSHDILIFGAGKAEQELCNEIYQILKEQNIKVKNLCNKTTIKTLCQNIAFCDLFITNDSGPMHLSAVYKVKTVAIFGPTKFTQTSPWQNENAKLVHLDLACMPCMQKTCPLKHHKCMKDLKPEKVIEQAKNLLKNSHL</sequence>
<comment type="function">
    <text evidence="2">Glycosyltransferase involved in the biosynthesis of the core oligosaccharide region of lipooligosaccharide (LOS) (PubMed:11914340). Catalyzes the addition of the second heptose unit to the heptosyl-Kdo2-lipid A module (PubMed:11914340).</text>
</comment>
<comment type="catalytic activity">
    <reaction evidence="5">
        <text>an L-alpha-D-Hep-(1-&gt;5)-[alpha-Kdo-(2-&gt;4)]-alpha-Kdo-(2-&gt;6)-lipid A + ADP-L-glycero-beta-D-manno-heptose = an L-alpha-D-Hep-(1-&gt;3)-L-alpha-D-Hep-(1-&gt;5)-[alpha-Kdo-(2-&gt;4)]-alpha-Kdo-(2-&gt;6)-lipid A + ADP + H(+)</text>
        <dbReference type="Rhea" id="RHEA:74071"/>
        <dbReference type="ChEBI" id="CHEBI:15378"/>
        <dbReference type="ChEBI" id="CHEBI:61506"/>
        <dbReference type="ChEBI" id="CHEBI:193068"/>
        <dbReference type="ChEBI" id="CHEBI:193069"/>
        <dbReference type="ChEBI" id="CHEBI:456216"/>
        <dbReference type="EC" id="2.4.99.24"/>
    </reaction>
</comment>
<comment type="pathway">
    <text evidence="2">Bacterial outer membrane biogenesis; LOS core biosynthesis.</text>
</comment>
<comment type="disruption phenotype">
    <text evidence="2">Mutant synthesizes a truncated LOS molecule.</text>
</comment>
<comment type="miscellaneous">
    <text evidence="2">Can complement a S.typhimurium mutant lacking waaF.</text>
</comment>
<comment type="similarity">
    <text evidence="4">Belongs to the glycosyltransferase 9 family.</text>
</comment>
<organism>
    <name type="scientific">Campylobacter jejuni subsp. jejuni serotype O:2 (strain ATCC 700819 / NCTC 11168)</name>
    <dbReference type="NCBI Taxonomy" id="192222"/>
    <lineage>
        <taxon>Bacteria</taxon>
        <taxon>Pseudomonadati</taxon>
        <taxon>Campylobacterota</taxon>
        <taxon>Epsilonproteobacteria</taxon>
        <taxon>Campylobacterales</taxon>
        <taxon>Campylobacteraceae</taxon>
        <taxon>Campylobacter</taxon>
    </lineage>
</organism>
<proteinExistence type="inferred from homology"/>
<name>WAAF_CAMJE</name>
<accession>Q0P9A8</accession>
<reference key="1">
    <citation type="journal article" date="2000" name="Nature">
        <title>The genome sequence of the food-borne pathogen Campylobacter jejuni reveals hypervariable sequences.</title>
        <authorList>
            <person name="Parkhill J."/>
            <person name="Wren B.W."/>
            <person name="Mungall K.L."/>
            <person name="Ketley J.M."/>
            <person name="Churcher C.M."/>
            <person name="Basham D."/>
            <person name="Chillingworth T."/>
            <person name="Davies R.M."/>
            <person name="Feltwell T."/>
            <person name="Holroyd S."/>
            <person name="Jagels K."/>
            <person name="Karlyshev A.V."/>
            <person name="Moule S."/>
            <person name="Pallen M.J."/>
            <person name="Penn C.W."/>
            <person name="Quail M.A."/>
            <person name="Rajandream M.A."/>
            <person name="Rutherford K.M."/>
            <person name="van Vliet A.H.M."/>
            <person name="Whitehead S."/>
            <person name="Barrell B.G."/>
        </authorList>
    </citation>
    <scope>NUCLEOTIDE SEQUENCE [LARGE SCALE GENOMIC DNA]</scope>
    <source>
        <strain>ATCC 700819 / NCTC 11168</strain>
    </source>
</reference>
<reference key="2">
    <citation type="journal article" date="2002" name="J. Bacteriol.">
        <title>Characterization of the Campylobacter jejuni heptosyltransferase II gene, waaF, provides genetic evidence that extracellular polysaccharide is lipid A core independent.</title>
        <authorList>
            <person name="Oldfield N.J."/>
            <person name="Moran A.P."/>
            <person name="Millar L.A."/>
            <person name="Prendergast M.M."/>
            <person name="Ketley J.M."/>
        </authorList>
    </citation>
    <scope>FUNCTION</scope>
    <scope>PATHWAY</scope>
    <scope>DISRUPTION PHENOTYPE</scope>
    <source>
        <strain>ATCC 700819 / NCTC 11168</strain>
    </source>
</reference>
<protein>
    <recommendedName>
        <fullName evidence="4">Lipooligosaccharide heptosyltransferase 2</fullName>
        <ecNumber evidence="1">2.4.99.24</ecNumber>
    </recommendedName>
    <alternativeName>
        <fullName evidence="4">ADP-heptose:lipooligosaccharide heptosyltransferase II</fullName>
        <shortName evidence="4">ADP-heptose:LOS heptosyltransferase II</shortName>
        <shortName evidence="3">Heptosyltransferase II</shortName>
    </alternativeName>
</protein>
<keyword id="KW-0328">Glycosyltransferase</keyword>
<keyword id="KW-1185">Reference proteome</keyword>
<keyword id="KW-0808">Transferase</keyword>
<dbReference type="EC" id="2.4.99.24" evidence="1"/>
<dbReference type="EMBL" id="AL111168">
    <property type="protein sequence ID" value="CAL35263.1"/>
    <property type="molecule type" value="Genomic_DNA"/>
</dbReference>
<dbReference type="PIR" id="F81319">
    <property type="entry name" value="F81319"/>
</dbReference>
<dbReference type="RefSeq" id="WP_002875425.1">
    <property type="nucleotide sequence ID" value="NZ_SZUC01000001.1"/>
</dbReference>
<dbReference type="RefSeq" id="YP_002344539.1">
    <property type="nucleotide sequence ID" value="NC_002163.1"/>
</dbReference>
<dbReference type="SMR" id="Q0P9A8"/>
<dbReference type="IntAct" id="Q0P9A8">
    <property type="interactions" value="12"/>
</dbReference>
<dbReference type="STRING" id="192222.Cj1148"/>
<dbReference type="CAZy" id="GT9">
    <property type="family name" value="Glycosyltransferase Family 9"/>
</dbReference>
<dbReference type="PaxDb" id="192222-Cj1148"/>
<dbReference type="EnsemblBacteria" id="CAL35263">
    <property type="protein sequence ID" value="CAL35263"/>
    <property type="gene ID" value="Cj1148"/>
</dbReference>
<dbReference type="GeneID" id="905438"/>
<dbReference type="KEGG" id="cje:Cj1148"/>
<dbReference type="PATRIC" id="fig|192222.6.peg.1129"/>
<dbReference type="eggNOG" id="COG0859">
    <property type="taxonomic scope" value="Bacteria"/>
</dbReference>
<dbReference type="HOGENOM" id="CLU_038371_7_0_7"/>
<dbReference type="OrthoDB" id="9797795at2"/>
<dbReference type="UniPathway" id="UPA00976"/>
<dbReference type="Proteomes" id="UP000000799">
    <property type="component" value="Chromosome"/>
</dbReference>
<dbReference type="GO" id="GO:0005829">
    <property type="term" value="C:cytosol"/>
    <property type="evidence" value="ECO:0007669"/>
    <property type="project" value="TreeGrafter"/>
</dbReference>
<dbReference type="GO" id="GO:0008713">
    <property type="term" value="F:ADP-heptose-lipopolysaccharide heptosyltransferase activity"/>
    <property type="evidence" value="ECO:0007669"/>
    <property type="project" value="TreeGrafter"/>
</dbReference>
<dbReference type="GO" id="GO:0009244">
    <property type="term" value="P:lipopolysaccharide core region biosynthetic process"/>
    <property type="evidence" value="ECO:0007669"/>
    <property type="project" value="TreeGrafter"/>
</dbReference>
<dbReference type="CDD" id="cd03789">
    <property type="entry name" value="GT9_LPS_heptosyltransferase"/>
    <property type="match status" value="1"/>
</dbReference>
<dbReference type="Gene3D" id="3.40.50.2000">
    <property type="entry name" value="Glycogen Phosphorylase B"/>
    <property type="match status" value="2"/>
</dbReference>
<dbReference type="InterPro" id="IPR002201">
    <property type="entry name" value="Glyco_trans_9"/>
</dbReference>
<dbReference type="InterPro" id="IPR051199">
    <property type="entry name" value="LPS_LOS_Heptosyltrfase"/>
</dbReference>
<dbReference type="InterPro" id="IPR011910">
    <property type="entry name" value="RfaF"/>
</dbReference>
<dbReference type="NCBIfam" id="TIGR02195">
    <property type="entry name" value="heptsyl_trn_II"/>
    <property type="match status" value="1"/>
</dbReference>
<dbReference type="PANTHER" id="PTHR30160:SF7">
    <property type="entry name" value="ADP-HEPTOSE--LPS HEPTOSYLTRANSFERASE 2"/>
    <property type="match status" value="1"/>
</dbReference>
<dbReference type="PANTHER" id="PTHR30160">
    <property type="entry name" value="TETRAACYLDISACCHARIDE 4'-KINASE-RELATED"/>
    <property type="match status" value="1"/>
</dbReference>
<dbReference type="Pfam" id="PF01075">
    <property type="entry name" value="Glyco_transf_9"/>
    <property type="match status" value="1"/>
</dbReference>
<dbReference type="SUPFAM" id="SSF53756">
    <property type="entry name" value="UDP-Glycosyltransferase/glycogen phosphorylase"/>
    <property type="match status" value="1"/>
</dbReference>
<feature type="chain" id="PRO_0000459173" description="Lipooligosaccharide heptosyltransferase 2">
    <location>
        <begin position="1"/>
        <end position="319"/>
    </location>
</feature>